<keyword id="KW-1003">Cell membrane</keyword>
<keyword id="KW-0472">Membrane</keyword>
<keyword id="KW-0677">Repeat</keyword>
<keyword id="KW-0812">Transmembrane</keyword>
<keyword id="KW-1133">Transmembrane helix</keyword>
<keyword id="KW-0813">Transport</keyword>
<gene>
    <name type="ordered locus">VC0395_A0715</name>
    <name type="ordered locus">VC395_1212</name>
</gene>
<comment type="subcellular location">
    <subcellularLocation>
        <location evidence="1">Cell membrane</location>
        <topology evidence="1">Multi-pass membrane protein</topology>
    </subcellularLocation>
</comment>
<comment type="similarity">
    <text evidence="1">Belongs to the AAE transporter (TC 2.A.81) family. YbjL subfamily.</text>
</comment>
<proteinExistence type="inferred from homology"/>
<protein>
    <recommendedName>
        <fullName evidence="1">Putative transport protein VC0395_A0715/VC395_1212</fullName>
    </recommendedName>
</protein>
<evidence type="ECO:0000255" key="1">
    <source>
        <dbReference type="HAMAP-Rule" id="MF_01015"/>
    </source>
</evidence>
<reference key="1">
    <citation type="submission" date="2007-03" db="EMBL/GenBank/DDBJ databases">
        <authorList>
            <person name="Heidelberg J."/>
        </authorList>
    </citation>
    <scope>NUCLEOTIDE SEQUENCE [LARGE SCALE GENOMIC DNA]</scope>
    <source>
        <strain>ATCC 39541 / Classical Ogawa 395 / O395</strain>
    </source>
</reference>
<reference key="2">
    <citation type="journal article" date="2008" name="PLoS ONE">
        <title>A recalibrated molecular clock and independent origins for the cholera pandemic clones.</title>
        <authorList>
            <person name="Feng L."/>
            <person name="Reeves P.R."/>
            <person name="Lan R."/>
            <person name="Ren Y."/>
            <person name="Gao C."/>
            <person name="Zhou Z."/>
            <person name="Ren Y."/>
            <person name="Cheng J."/>
            <person name="Wang W."/>
            <person name="Wang J."/>
            <person name="Qian W."/>
            <person name="Li D."/>
            <person name="Wang L."/>
        </authorList>
    </citation>
    <scope>NUCLEOTIDE SEQUENCE [LARGE SCALE GENOMIC DNA]</scope>
    <source>
        <strain>ATCC 39541 / Classical Ogawa 395 / O395</strain>
    </source>
</reference>
<sequence length="558" mass="60503">MNIDVVLLLEQNPILLIFVVLAIGLSFGKIRFGSFQLGNSIGVLITSLIMGHLGFSFTPEALTIGFMLFIYCVGIEAGPNFFGIFFRDGKHYLILSLVVLITATWIAYFGGYYLNLDYGLAAGMMAGALTSTPVLVGAQDALNSGLAAVPRHMDLSLILDNVSVGYAMAYLIGLISMIMFAKLLPKLQKQNLSDSAQQIAQERGLGSQRKVYLPIIRAYRVGPELINWIDGRNLRELGIYRQTGCYIERIRRHGILAHPDGDAILQEGDEIALVGFPDSHARLDPSFRNGKEVFDRNLLDLRISEEEIVVKSDSIAGKRLSDLNLSEYGCFLNRVVRAQIEMPMDLDIVLAKGDVLQVSGEKSKVKGLADKIGFISVHSQMADLLAFCSFFILGILFGLVTMTFGQVSFSLGNAVGLLLSGITLGFLRANHPTFGYVPQGALNMVKDLGLAIFMVGIGLNAGSKMFQHLSEVGVQVIGLAFLVSVVPVVFAYLVGAYILKMNRALLFGAIIGARTCAPAMDVVNEYAKSTIPALGYAGTYAIANILMTLTGTIFILLS</sequence>
<accession>A5F296</accession>
<accession>C3LZK6</accession>
<organism>
    <name type="scientific">Vibrio cholerae serotype O1 (strain ATCC 39541 / Classical Ogawa 395 / O395)</name>
    <dbReference type="NCBI Taxonomy" id="345073"/>
    <lineage>
        <taxon>Bacteria</taxon>
        <taxon>Pseudomonadati</taxon>
        <taxon>Pseudomonadota</taxon>
        <taxon>Gammaproteobacteria</taxon>
        <taxon>Vibrionales</taxon>
        <taxon>Vibrionaceae</taxon>
        <taxon>Vibrio</taxon>
    </lineage>
</organism>
<dbReference type="EMBL" id="CP000627">
    <property type="protein sequence ID" value="ABQ21673.1"/>
    <property type="molecule type" value="Genomic_DNA"/>
</dbReference>
<dbReference type="EMBL" id="CP001235">
    <property type="protein sequence ID" value="ACP09222.1"/>
    <property type="molecule type" value="Genomic_DNA"/>
</dbReference>
<dbReference type="RefSeq" id="WP_001018084.1">
    <property type="nucleotide sequence ID" value="NZ_JAACZH010000034.1"/>
</dbReference>
<dbReference type="SMR" id="A5F296"/>
<dbReference type="KEGG" id="vco:VC0395_A0715"/>
<dbReference type="KEGG" id="vcr:VC395_1212"/>
<dbReference type="PATRIC" id="fig|345073.21.peg.1179"/>
<dbReference type="eggNOG" id="COG2985">
    <property type="taxonomic scope" value="Bacteria"/>
</dbReference>
<dbReference type="eggNOG" id="COG3273">
    <property type="taxonomic scope" value="Bacteria"/>
</dbReference>
<dbReference type="HOGENOM" id="CLU_035023_2_2_6"/>
<dbReference type="OrthoDB" id="5166626at2"/>
<dbReference type="Proteomes" id="UP000000249">
    <property type="component" value="Chromosome 2"/>
</dbReference>
<dbReference type="GO" id="GO:0005886">
    <property type="term" value="C:plasma membrane"/>
    <property type="evidence" value="ECO:0007669"/>
    <property type="project" value="UniProtKB-SubCell"/>
</dbReference>
<dbReference type="GO" id="GO:0008324">
    <property type="term" value="F:monoatomic cation transmembrane transporter activity"/>
    <property type="evidence" value="ECO:0007669"/>
    <property type="project" value="InterPro"/>
</dbReference>
<dbReference type="GO" id="GO:0006813">
    <property type="term" value="P:potassium ion transport"/>
    <property type="evidence" value="ECO:0007669"/>
    <property type="project" value="InterPro"/>
</dbReference>
<dbReference type="Gene3D" id="3.30.70.1450">
    <property type="entry name" value="Regulator of K+ conductance, C-terminal domain"/>
    <property type="match status" value="2"/>
</dbReference>
<dbReference type="HAMAP" id="MF_01015">
    <property type="entry name" value="YbjL"/>
    <property type="match status" value="1"/>
</dbReference>
<dbReference type="InterPro" id="IPR050144">
    <property type="entry name" value="AAE_transporter"/>
</dbReference>
<dbReference type="InterPro" id="IPR006037">
    <property type="entry name" value="RCK_C"/>
</dbReference>
<dbReference type="InterPro" id="IPR036721">
    <property type="entry name" value="RCK_C_sf"/>
</dbReference>
<dbReference type="InterPro" id="IPR023017">
    <property type="entry name" value="Transp_YbjL_put"/>
</dbReference>
<dbReference type="InterPro" id="IPR006512">
    <property type="entry name" value="YidE_YbjL"/>
</dbReference>
<dbReference type="NCBIfam" id="NF003440">
    <property type="entry name" value="PRK04972.1"/>
    <property type="match status" value="1"/>
</dbReference>
<dbReference type="NCBIfam" id="TIGR01625">
    <property type="entry name" value="YidE_YbjL_dupl"/>
    <property type="match status" value="2"/>
</dbReference>
<dbReference type="PANTHER" id="PTHR30445">
    <property type="entry name" value="K(+)_H(+) ANTIPORTER SUBUNIT KHTT"/>
    <property type="match status" value="1"/>
</dbReference>
<dbReference type="PANTHER" id="PTHR30445:SF10">
    <property type="entry name" value="TRANSPORT PROTEIN YBJL-RELATED"/>
    <property type="match status" value="1"/>
</dbReference>
<dbReference type="Pfam" id="PF06826">
    <property type="entry name" value="Asp-Al_Ex"/>
    <property type="match status" value="2"/>
</dbReference>
<dbReference type="Pfam" id="PF02080">
    <property type="entry name" value="TrkA_C"/>
    <property type="match status" value="2"/>
</dbReference>
<dbReference type="SUPFAM" id="SSF116726">
    <property type="entry name" value="TrkA C-terminal domain-like"/>
    <property type="match status" value="2"/>
</dbReference>
<dbReference type="PROSITE" id="PS51202">
    <property type="entry name" value="RCK_C"/>
    <property type="match status" value="2"/>
</dbReference>
<feature type="chain" id="PRO_0000329149" description="Putative transport protein VC0395_A0715/VC395_1212">
    <location>
        <begin position="1"/>
        <end position="558"/>
    </location>
</feature>
<feature type="transmembrane region" description="Helical" evidence="1">
    <location>
        <begin position="5"/>
        <end position="25"/>
    </location>
</feature>
<feature type="transmembrane region" description="Helical" evidence="1">
    <location>
        <begin position="37"/>
        <end position="57"/>
    </location>
</feature>
<feature type="transmembrane region" description="Helical" evidence="1">
    <location>
        <begin position="66"/>
        <end position="86"/>
    </location>
</feature>
<feature type="transmembrane region" description="Helical" evidence="1">
    <location>
        <begin position="92"/>
        <end position="112"/>
    </location>
</feature>
<feature type="transmembrane region" description="Helical" evidence="1">
    <location>
        <begin position="164"/>
        <end position="184"/>
    </location>
</feature>
<feature type="transmembrane region" description="Helical" evidence="1">
    <location>
        <begin position="384"/>
        <end position="404"/>
    </location>
</feature>
<feature type="transmembrane region" description="Helical" evidence="1">
    <location>
        <begin position="407"/>
        <end position="427"/>
    </location>
</feature>
<feature type="transmembrane region" description="Helical" evidence="1">
    <location>
        <begin position="441"/>
        <end position="461"/>
    </location>
</feature>
<feature type="transmembrane region" description="Helical" evidence="1">
    <location>
        <begin position="476"/>
        <end position="496"/>
    </location>
</feature>
<feature type="transmembrane region" description="Helical" evidence="1">
    <location>
        <begin position="504"/>
        <end position="524"/>
    </location>
</feature>
<feature type="transmembrane region" description="Helical" evidence="1">
    <location>
        <begin position="537"/>
        <end position="557"/>
    </location>
</feature>
<feature type="domain" description="RCK C-terminal 1" evidence="1">
    <location>
        <begin position="203"/>
        <end position="290"/>
    </location>
</feature>
<feature type="domain" description="RCK C-terminal 2" evidence="1">
    <location>
        <begin position="291"/>
        <end position="374"/>
    </location>
</feature>
<name>Y1915_VIBC3</name>